<comment type="function">
    <text evidence="2 3">Energy-dependent phospholipid efflux translocator that acts as a positive regulator of biliary lipid secretion. Functions as a floppase that translocates specifically phosphatidylcholine (PC) from the inner to the outer leaflet of the canalicular membrane bilayer into the canaliculi of hepatocytes. Translocation of PC makes the biliary phospholipids available for extraction into the canaliculi lumen by bile salt mixed micelles and therefore protects the biliary tree from the detergent activity of bile salts. Plays a role in the recruitment of phosphatidylcholine (PC), phosphatidylethanolamine (PE) and sphingomyelin (SM) molecules to nonraft membranes and to further enrichment of SM and cholesterol in raft membranes in hepatocytes. Required for proper phospholipid bile formation. Indirectly involved in cholesterol efflux activity from hepatocytes into the canalicular lumen in the presence of bile salts in an ATP-dependent manner. May promote biliary phospholipid secretion as canaliculi-containing vesicles from the canalicular plasma membrane. In cooperation with ATP8B1, functions to protect hepatocytes from the deleterious detergent activity of bile salts. Does not confer multidrug resistance.</text>
</comment>
<comment type="catalytic activity">
    <reaction evidence="3">
        <text>ATP + H2O + phospholipidSide 1 = ADP + phosphate + phospholipidSide 2.</text>
        <dbReference type="EC" id="7.6.2.1"/>
    </reaction>
</comment>
<comment type="catalytic activity">
    <reaction evidence="3">
        <text>a 1,2-diacyl-sn-glycero-3-phosphocholine(in) + ATP + H2O = a 1,2-diacyl-sn-glycero-3-phosphocholine(out) + ADP + phosphate + H(+)</text>
        <dbReference type="Rhea" id="RHEA:66272"/>
        <dbReference type="ChEBI" id="CHEBI:15377"/>
        <dbReference type="ChEBI" id="CHEBI:15378"/>
        <dbReference type="ChEBI" id="CHEBI:30616"/>
        <dbReference type="ChEBI" id="CHEBI:43474"/>
        <dbReference type="ChEBI" id="CHEBI:57643"/>
        <dbReference type="ChEBI" id="CHEBI:456216"/>
    </reaction>
    <physiologicalReaction direction="left-to-right" evidence="3">
        <dbReference type="Rhea" id="RHEA:66273"/>
    </physiologicalReaction>
</comment>
<comment type="catalytic activity">
    <reaction evidence="2">
        <text>a 1,2-diacyl-sn-glycero-3-phosphoethanolamine(in) + ATP + H2O = a 1,2-diacyl-sn-glycero-3-phosphoethanolamine(out) + ADP + phosphate + H(+)</text>
        <dbReference type="Rhea" id="RHEA:36439"/>
        <dbReference type="ChEBI" id="CHEBI:15377"/>
        <dbReference type="ChEBI" id="CHEBI:15378"/>
        <dbReference type="ChEBI" id="CHEBI:30616"/>
        <dbReference type="ChEBI" id="CHEBI:43474"/>
        <dbReference type="ChEBI" id="CHEBI:64612"/>
        <dbReference type="ChEBI" id="CHEBI:456216"/>
    </reaction>
    <physiologicalReaction direction="left-to-right" evidence="2">
        <dbReference type="Rhea" id="RHEA:36440"/>
    </physiologicalReaction>
</comment>
<comment type="catalytic activity">
    <reaction evidence="2">
        <text>a sphingomyelin(in) + ATP + H2O = a sphingomyelin(out) + ADP + phosphate + H(+)</text>
        <dbReference type="Rhea" id="RHEA:38903"/>
        <dbReference type="ChEBI" id="CHEBI:15377"/>
        <dbReference type="ChEBI" id="CHEBI:15378"/>
        <dbReference type="ChEBI" id="CHEBI:17636"/>
        <dbReference type="ChEBI" id="CHEBI:30616"/>
        <dbReference type="ChEBI" id="CHEBI:43474"/>
        <dbReference type="ChEBI" id="CHEBI:456216"/>
    </reaction>
    <physiologicalReaction direction="left-to-right" evidence="2">
        <dbReference type="Rhea" id="RHEA:38904"/>
    </physiologicalReaction>
</comment>
<comment type="activity regulation">
    <text evidence="2">Translocation activity is inhibited by the ATPase inhibitor vanadate and the calcium channel blocker verapamil. Translocation activity is enhanced by the addition of the bile salt taurocholate.</text>
</comment>
<comment type="subunit">
    <text evidence="2 4">Interacts with HAX1. May interact with RACK1.</text>
</comment>
<comment type="subcellular location">
    <subcellularLocation>
        <location evidence="2">Cell membrane</location>
        <topology evidence="7">Multi-pass membrane protein</topology>
    </subcellularLocation>
    <subcellularLocation>
        <location evidence="2">Apical cell membrane</location>
        <topology evidence="7">Multi-pass membrane protein</topology>
    </subcellularLocation>
    <subcellularLocation>
        <location evidence="2">Membrane raft</location>
    </subcellularLocation>
    <subcellularLocation>
        <location evidence="2">Cytoplasm</location>
    </subcellularLocation>
    <subcellularLocation>
        <location evidence="4">Cytoplasmic vesicle</location>
        <location evidence="4">Clathrin-coated vesicle</location>
    </subcellularLocation>
    <text evidence="2 3">Localized at the apical canalicular membrane of the epithelial cells lining the lumen of the bile canaliculi and biliary ductules. Localized preferentially in lipid nonraft domains of canalicular plasma membranes. Transported from the Golgi to the apical bile canalicular membrane in a RACK1-dependent manner. Redistributed into pseudocanaliculi formed between cells in a bezafibrate- or PPARA-dependent manner.</text>
</comment>
<comment type="PTM">
    <text evidence="2">Phosphorylated. Phosphorylation is required for PC efflux activity. Phosphorylation occurs on serine and threonine residues in a protein kinase A- or C-dependent manner. May be phosphorylated on Thr-44 and Ser-49.</text>
</comment>
<comment type="PTM">
    <text evidence="2">Glycosylated.</text>
</comment>
<comment type="similarity">
    <text evidence="9">Belongs to the ABC transporter superfamily. ABCB family. Multidrug resistance exporter (TC 3.A.1.201) subfamily.</text>
</comment>
<accession>P23174</accession>
<dbReference type="EC" id="7.6.2.1" evidence="3"/>
<dbReference type="EMBL" id="M60042">
    <property type="protein sequence ID" value="AAA68885.1"/>
    <property type="molecule type" value="mRNA"/>
</dbReference>
<dbReference type="PIR" id="I48120">
    <property type="entry name" value="I48120"/>
</dbReference>
<dbReference type="PIR" id="I48123">
    <property type="entry name" value="I48123"/>
</dbReference>
<dbReference type="RefSeq" id="NP_001230916.1">
    <property type="nucleotide sequence ID" value="NM_001243987.1"/>
</dbReference>
<dbReference type="SMR" id="P23174"/>
<dbReference type="GlyCosmos" id="P23174">
    <property type="glycosylation" value="2 sites, No reported glycans"/>
</dbReference>
<dbReference type="PaxDb" id="10029-NP_001230916.1"/>
<dbReference type="GeneID" id="100682535"/>
<dbReference type="KEGG" id="cge:100682535"/>
<dbReference type="CTD" id="5244"/>
<dbReference type="eggNOG" id="KOG0055">
    <property type="taxonomic scope" value="Eukaryota"/>
</dbReference>
<dbReference type="OrthoDB" id="6500128at2759"/>
<dbReference type="Proteomes" id="UP000694386">
    <property type="component" value="Unplaced"/>
</dbReference>
<dbReference type="Proteomes" id="UP001108280">
    <property type="component" value="Chromosome 1"/>
</dbReference>
<dbReference type="GO" id="GO:0016324">
    <property type="term" value="C:apical plasma membrane"/>
    <property type="evidence" value="ECO:0000250"/>
    <property type="project" value="UniProtKB"/>
</dbReference>
<dbReference type="GO" id="GO:0030136">
    <property type="term" value="C:clathrin-coated vesicle"/>
    <property type="evidence" value="ECO:0007669"/>
    <property type="project" value="UniProtKB-SubCell"/>
</dbReference>
<dbReference type="GO" id="GO:0005737">
    <property type="term" value="C:cytoplasm"/>
    <property type="evidence" value="ECO:0000250"/>
    <property type="project" value="UniProtKB"/>
</dbReference>
<dbReference type="GO" id="GO:0045121">
    <property type="term" value="C:membrane raft"/>
    <property type="evidence" value="ECO:0007669"/>
    <property type="project" value="UniProtKB-SubCell"/>
</dbReference>
<dbReference type="GO" id="GO:0005743">
    <property type="term" value="C:mitochondrial inner membrane"/>
    <property type="evidence" value="ECO:0007669"/>
    <property type="project" value="TreeGrafter"/>
</dbReference>
<dbReference type="GO" id="GO:0005886">
    <property type="term" value="C:plasma membrane"/>
    <property type="evidence" value="ECO:0000250"/>
    <property type="project" value="UniProtKB"/>
</dbReference>
<dbReference type="GO" id="GO:0015421">
    <property type="term" value="F:ABC-type oligopeptide transporter activity"/>
    <property type="evidence" value="ECO:0007669"/>
    <property type="project" value="TreeGrafter"/>
</dbReference>
<dbReference type="GO" id="GO:0005524">
    <property type="term" value="F:ATP binding"/>
    <property type="evidence" value="ECO:0007669"/>
    <property type="project" value="UniProtKB-KW"/>
</dbReference>
<dbReference type="GO" id="GO:0016887">
    <property type="term" value="F:ATP hydrolysis activity"/>
    <property type="evidence" value="ECO:0007669"/>
    <property type="project" value="InterPro"/>
</dbReference>
<dbReference type="GO" id="GO:0042626">
    <property type="term" value="F:ATPase-coupled transmembrane transporter activity"/>
    <property type="evidence" value="ECO:0000250"/>
    <property type="project" value="UniProtKB"/>
</dbReference>
<dbReference type="GO" id="GO:0090554">
    <property type="term" value="F:phosphatidylcholine floppase activity"/>
    <property type="evidence" value="ECO:0000250"/>
    <property type="project" value="UniProtKB"/>
</dbReference>
<dbReference type="GO" id="GO:0032782">
    <property type="term" value="P:bile acid secretion"/>
    <property type="evidence" value="ECO:0000250"/>
    <property type="project" value="UniProtKB"/>
</dbReference>
<dbReference type="GO" id="GO:1903413">
    <property type="term" value="P:cellular response to bile acid"/>
    <property type="evidence" value="ECO:0000250"/>
    <property type="project" value="UniProtKB"/>
</dbReference>
<dbReference type="GO" id="GO:0055088">
    <property type="term" value="P:lipid homeostasis"/>
    <property type="evidence" value="ECO:0000250"/>
    <property type="project" value="UniProtKB"/>
</dbReference>
<dbReference type="GO" id="GO:0090374">
    <property type="term" value="P:oligopeptide export from mitochondrion"/>
    <property type="evidence" value="ECO:0007669"/>
    <property type="project" value="TreeGrafter"/>
</dbReference>
<dbReference type="GO" id="GO:0032376">
    <property type="term" value="P:positive regulation of cholesterol transport"/>
    <property type="evidence" value="ECO:0000250"/>
    <property type="project" value="UniProtKB"/>
</dbReference>
<dbReference type="GO" id="GO:0061092">
    <property type="term" value="P:positive regulation of phospholipid translocation"/>
    <property type="evidence" value="ECO:0000250"/>
    <property type="project" value="UniProtKB"/>
</dbReference>
<dbReference type="GO" id="GO:2001140">
    <property type="term" value="P:positive regulation of phospholipid transport"/>
    <property type="evidence" value="ECO:0000250"/>
    <property type="project" value="UniProtKB"/>
</dbReference>
<dbReference type="GO" id="GO:1901557">
    <property type="term" value="P:response to fenofibrate"/>
    <property type="evidence" value="ECO:0000250"/>
    <property type="project" value="UniProtKB"/>
</dbReference>
<dbReference type="CDD" id="cd18578">
    <property type="entry name" value="ABC_6TM_Pgp_ABCB1_D2_like"/>
    <property type="match status" value="1"/>
</dbReference>
<dbReference type="CDD" id="cd03249">
    <property type="entry name" value="ABC_MTABC3_MDL1_MDL2"/>
    <property type="match status" value="2"/>
</dbReference>
<dbReference type="FunFam" id="1.20.1560.10:FF:000018">
    <property type="entry name" value="ATP-binding cassette subfamily B member 11"/>
    <property type="match status" value="1"/>
</dbReference>
<dbReference type="FunFam" id="1.20.1560.10:FF:000043">
    <property type="entry name" value="Multidrug resistance protein 1A"/>
    <property type="match status" value="1"/>
</dbReference>
<dbReference type="FunFam" id="3.40.50.300:FF:000479">
    <property type="entry name" value="Multidrug resistance protein 1A"/>
    <property type="match status" value="2"/>
</dbReference>
<dbReference type="FunFam" id="1.20.1560.10:FF:000083">
    <property type="entry name" value="phosphatidylcholine translocator ABCB4 isoform X7"/>
    <property type="match status" value="1"/>
</dbReference>
<dbReference type="Gene3D" id="1.20.1560.10">
    <property type="entry name" value="ABC transporter type 1, transmembrane domain"/>
    <property type="match status" value="1"/>
</dbReference>
<dbReference type="Gene3D" id="3.40.50.300">
    <property type="entry name" value="P-loop containing nucleotide triphosphate hydrolases"/>
    <property type="match status" value="2"/>
</dbReference>
<dbReference type="InterPro" id="IPR003593">
    <property type="entry name" value="AAA+_ATPase"/>
</dbReference>
<dbReference type="InterPro" id="IPR011527">
    <property type="entry name" value="ABC1_TM_dom"/>
</dbReference>
<dbReference type="InterPro" id="IPR036640">
    <property type="entry name" value="ABC1_TM_sf"/>
</dbReference>
<dbReference type="InterPro" id="IPR003439">
    <property type="entry name" value="ABC_transporter-like_ATP-bd"/>
</dbReference>
<dbReference type="InterPro" id="IPR017871">
    <property type="entry name" value="ABC_transporter-like_CS"/>
</dbReference>
<dbReference type="InterPro" id="IPR027417">
    <property type="entry name" value="P-loop_NTPase"/>
</dbReference>
<dbReference type="InterPro" id="IPR039421">
    <property type="entry name" value="Type_1_exporter"/>
</dbReference>
<dbReference type="PANTHER" id="PTHR43394:SF28">
    <property type="entry name" value="ATP-BINDING CASSETTE SUBFAMILY B MEMBER 1"/>
    <property type="match status" value="1"/>
</dbReference>
<dbReference type="PANTHER" id="PTHR43394">
    <property type="entry name" value="ATP-DEPENDENT PERMEASE MDL1, MITOCHONDRIAL"/>
    <property type="match status" value="1"/>
</dbReference>
<dbReference type="Pfam" id="PF00664">
    <property type="entry name" value="ABC_membrane"/>
    <property type="match status" value="2"/>
</dbReference>
<dbReference type="Pfam" id="PF00005">
    <property type="entry name" value="ABC_tran"/>
    <property type="match status" value="2"/>
</dbReference>
<dbReference type="SMART" id="SM00382">
    <property type="entry name" value="AAA"/>
    <property type="match status" value="2"/>
</dbReference>
<dbReference type="SUPFAM" id="SSF90123">
    <property type="entry name" value="ABC transporter transmembrane region"/>
    <property type="match status" value="2"/>
</dbReference>
<dbReference type="SUPFAM" id="SSF52540">
    <property type="entry name" value="P-loop containing nucleoside triphosphate hydrolases"/>
    <property type="match status" value="2"/>
</dbReference>
<dbReference type="PROSITE" id="PS50929">
    <property type="entry name" value="ABC_TM1F"/>
    <property type="match status" value="2"/>
</dbReference>
<dbReference type="PROSITE" id="PS00211">
    <property type="entry name" value="ABC_TRANSPORTER_1"/>
    <property type="match status" value="1"/>
</dbReference>
<dbReference type="PROSITE" id="PS50893">
    <property type="entry name" value="ABC_TRANSPORTER_2"/>
    <property type="match status" value="2"/>
</dbReference>
<name>MDR3_CRIGR</name>
<organism>
    <name type="scientific">Cricetulus griseus</name>
    <name type="common">Chinese hamster</name>
    <name type="synonym">Cricetulus barabensis griseus</name>
    <dbReference type="NCBI Taxonomy" id="10029"/>
    <lineage>
        <taxon>Eukaryota</taxon>
        <taxon>Metazoa</taxon>
        <taxon>Chordata</taxon>
        <taxon>Craniata</taxon>
        <taxon>Vertebrata</taxon>
        <taxon>Euteleostomi</taxon>
        <taxon>Mammalia</taxon>
        <taxon>Eutheria</taxon>
        <taxon>Euarchontoglires</taxon>
        <taxon>Glires</taxon>
        <taxon>Rodentia</taxon>
        <taxon>Myomorpha</taxon>
        <taxon>Muroidea</taxon>
        <taxon>Cricetidae</taxon>
        <taxon>Cricetinae</taxon>
        <taxon>Cricetulus</taxon>
    </lineage>
</organism>
<reference key="1">
    <citation type="journal article" date="1991" name="DNA Seq.">
        <title>Complete cDNA sequences encoding the Chinese hamster P-glycoprotein gene family.</title>
        <authorList>
            <person name="Endicott J.A."/>
            <person name="Sarangi F."/>
            <person name="Ling V."/>
        </authorList>
    </citation>
    <scope>NUCLEOTIDE SEQUENCE [MRNA]</scope>
</reference>
<proteinExistence type="evidence at transcript level"/>
<evidence type="ECO:0000250" key="1"/>
<evidence type="ECO:0000250" key="2">
    <source>
        <dbReference type="UniProtKB" id="P21439"/>
    </source>
</evidence>
<evidence type="ECO:0000250" key="3">
    <source>
        <dbReference type="UniProtKB" id="P21440"/>
    </source>
</evidence>
<evidence type="ECO:0000250" key="4">
    <source>
        <dbReference type="UniProtKB" id="Q08201"/>
    </source>
</evidence>
<evidence type="ECO:0000255" key="5"/>
<evidence type="ECO:0000255" key="6">
    <source>
        <dbReference type="PROSITE-ProRule" id="PRU00434"/>
    </source>
</evidence>
<evidence type="ECO:0000255" key="7">
    <source>
        <dbReference type="PROSITE-ProRule" id="PRU00441"/>
    </source>
</evidence>
<evidence type="ECO:0000256" key="8">
    <source>
        <dbReference type="SAM" id="MobiDB-lite"/>
    </source>
</evidence>
<evidence type="ECO:0000305" key="9"/>
<gene>
    <name evidence="2" type="primary">ABCB4</name>
    <name evidence="4" type="synonym">PGP3</name>
    <name type="synonym">PGY3</name>
</gene>
<feature type="chain" id="PRO_0000093341" description="Phosphatidylcholine translocator ABCB4">
    <location>
        <begin position="1"/>
        <end position="1281"/>
    </location>
</feature>
<feature type="topological domain" description="Cytoplasmic" evidence="1">
    <location>
        <begin position="1"/>
        <end position="50"/>
    </location>
</feature>
<feature type="transmembrane region" description="Helical" evidence="7">
    <location>
        <begin position="51"/>
        <end position="73"/>
    </location>
</feature>
<feature type="topological domain" description="Extracellular" evidence="1">
    <location>
        <begin position="74"/>
        <end position="118"/>
    </location>
</feature>
<feature type="transmembrane region" description="Helical" evidence="7">
    <location>
        <begin position="119"/>
        <end position="139"/>
    </location>
</feature>
<feature type="topological domain" description="Cytoplasmic" evidence="1">
    <location>
        <begin position="140"/>
        <end position="188"/>
    </location>
</feature>
<feature type="transmembrane region" description="Helical" evidence="7">
    <location>
        <begin position="189"/>
        <end position="210"/>
    </location>
</feature>
<feature type="topological domain" description="Extracellular" evidence="1">
    <location>
        <begin position="211"/>
        <end position="217"/>
    </location>
</feature>
<feature type="transmembrane region" description="Helical" evidence="7">
    <location>
        <begin position="218"/>
        <end position="238"/>
    </location>
</feature>
<feature type="topological domain" description="Cytoplasmic" evidence="1">
    <location>
        <begin position="239"/>
        <end position="296"/>
    </location>
</feature>
<feature type="transmembrane region" description="Helical" evidence="7">
    <location>
        <begin position="297"/>
        <end position="318"/>
    </location>
</feature>
<feature type="topological domain" description="Extracellular" evidence="1">
    <location>
        <begin position="319"/>
        <end position="332"/>
    </location>
</feature>
<feature type="transmembrane region" description="Helical" evidence="7">
    <location>
        <begin position="333"/>
        <end position="354"/>
    </location>
</feature>
<feature type="topological domain" description="Cytoplasmic" evidence="1">
    <location>
        <begin position="355"/>
        <end position="713"/>
    </location>
</feature>
<feature type="transmembrane region" description="Helical" evidence="7">
    <location>
        <begin position="714"/>
        <end position="734"/>
    </location>
</feature>
<feature type="topological domain" description="Extracellular" evidence="1">
    <location>
        <begin position="735"/>
        <end position="757"/>
    </location>
</feature>
<feature type="transmembrane region" description="Helical" evidence="7">
    <location>
        <begin position="758"/>
        <end position="778"/>
    </location>
</feature>
<feature type="topological domain" description="Cytoplasmic" evidence="1">
    <location>
        <begin position="779"/>
        <end position="833"/>
    </location>
</feature>
<feature type="transmembrane region" description="Helical" evidence="7">
    <location>
        <begin position="834"/>
        <end position="854"/>
    </location>
</feature>
<feature type="topological domain" description="Extracellular" evidence="1">
    <location>
        <position position="855"/>
    </location>
</feature>
<feature type="transmembrane region" description="Helical" evidence="7">
    <location>
        <begin position="856"/>
        <end position="875"/>
    </location>
</feature>
<feature type="topological domain" description="Cytoplasmic" evidence="1">
    <location>
        <begin position="876"/>
        <end position="937"/>
    </location>
</feature>
<feature type="transmembrane region" description="Helical" evidence="7">
    <location>
        <begin position="938"/>
        <end position="958"/>
    </location>
</feature>
<feature type="topological domain" description="Extracellular" evidence="1">
    <location>
        <begin position="959"/>
        <end position="974"/>
    </location>
</feature>
<feature type="transmembrane region" description="Helical" evidence="7">
    <location>
        <begin position="975"/>
        <end position="996"/>
    </location>
</feature>
<feature type="topological domain" description="Cytoplasmic" evidence="1">
    <location>
        <begin position="997"/>
        <end position="1281"/>
    </location>
</feature>
<feature type="domain" description="ABC transmembrane type-1 1" evidence="7">
    <location>
        <begin position="57"/>
        <end position="359"/>
    </location>
</feature>
<feature type="domain" description="ABC transporter 1" evidence="6">
    <location>
        <begin position="394"/>
        <end position="630"/>
    </location>
</feature>
<feature type="domain" description="ABC transmembrane type-1 2" evidence="7">
    <location>
        <begin position="713"/>
        <end position="1001"/>
    </location>
</feature>
<feature type="domain" description="ABC transporter 2" evidence="6">
    <location>
        <begin position="1036"/>
        <end position="1274"/>
    </location>
</feature>
<feature type="region of interest" description="Disordered" evidence="8">
    <location>
        <begin position="1"/>
        <end position="24"/>
    </location>
</feature>
<feature type="region of interest" description="Interaction with HAX1" evidence="1">
    <location>
        <begin position="625"/>
        <end position="649"/>
    </location>
</feature>
<feature type="binding site" evidence="2">
    <location>
        <position position="406"/>
    </location>
    <ligand>
        <name>ATP</name>
        <dbReference type="ChEBI" id="CHEBI:30616"/>
        <label>1</label>
    </ligand>
</feature>
<feature type="binding site" evidence="2 6">
    <location>
        <begin position="432"/>
        <end position="437"/>
    </location>
    <ligand>
        <name>ATP</name>
        <dbReference type="ChEBI" id="CHEBI:30616"/>
        <label>1</label>
    </ligand>
</feature>
<feature type="binding site" evidence="2">
    <location>
        <position position="477"/>
    </location>
    <ligand>
        <name>ATP</name>
        <dbReference type="ChEBI" id="CHEBI:30616"/>
        <label>1</label>
    </ligand>
</feature>
<feature type="binding site" evidence="2">
    <location>
        <position position="536"/>
    </location>
    <ligand>
        <name>ATP</name>
        <dbReference type="ChEBI" id="CHEBI:30616"/>
        <label>2</label>
    </ligand>
</feature>
<feature type="binding site" evidence="2">
    <location>
        <position position="1048"/>
    </location>
    <ligand>
        <name>ATP</name>
        <dbReference type="ChEBI" id="CHEBI:30616"/>
        <label>2</label>
    </ligand>
</feature>
<feature type="binding site" evidence="2 6">
    <location>
        <begin position="1073"/>
        <end position="1079"/>
    </location>
    <ligand>
        <name>ATP</name>
        <dbReference type="ChEBI" id="CHEBI:30616"/>
        <label>2</label>
    </ligand>
</feature>
<feature type="binding site" evidence="2">
    <location>
        <position position="1119"/>
    </location>
    <ligand>
        <name>ATP</name>
        <dbReference type="ChEBI" id="CHEBI:30616"/>
        <label>2</label>
    </ligand>
</feature>
<feature type="binding site" evidence="2 6">
    <location>
        <begin position="1179"/>
        <end position="1181"/>
    </location>
    <ligand>
        <name>ATP</name>
        <dbReference type="ChEBI" id="CHEBI:30616"/>
        <label>1</label>
    </ligand>
</feature>
<feature type="modified residue" description="Phosphoserine" evidence="3">
    <location>
        <position position="27"/>
    </location>
</feature>
<feature type="glycosylation site" description="N-linked (GlcNAc...) asparagine" evidence="5">
    <location>
        <position position="91"/>
    </location>
</feature>
<feature type="glycosylation site" description="N-linked (GlcNAc...) asparagine" evidence="5">
    <location>
        <position position="97"/>
    </location>
</feature>
<keyword id="KW-0067">ATP-binding</keyword>
<keyword id="KW-1003">Cell membrane</keyword>
<keyword id="KW-0963">Cytoplasm</keyword>
<keyword id="KW-0968">Cytoplasmic vesicle</keyword>
<keyword id="KW-0325">Glycoprotein</keyword>
<keyword id="KW-0445">Lipid transport</keyword>
<keyword id="KW-0472">Membrane</keyword>
<keyword id="KW-0547">Nucleotide-binding</keyword>
<keyword id="KW-0597">Phosphoprotein</keyword>
<keyword id="KW-0677">Repeat</keyword>
<keyword id="KW-1278">Translocase</keyword>
<keyword id="KW-0812">Transmembrane</keyword>
<keyword id="KW-1133">Transmembrane helix</keyword>
<keyword id="KW-0813">Transport</keyword>
<sequence>MDLEAARNGTARRPGTVEGDFELGSISNQGRNKKKKVNLIGPLTLFRYSDWQDKLFMLLGTIMAIAHGSGLPLMMIVFGEMTDKFVNNAGNFSLPVNFSLSMINPGRILEEEMTRYAYYYSGLGGGVLVAAYIQVSFWTLAAGRQIKKIRQNFFHAILRQEMGWFDIKGTTELNTRLTDDISKISEGIGDKVGMFFQAVATFFAGFIVGFIRGWKLTLVIMAISPILGLSAAVWAKILSTFSDKELAAYAKAGAVAEEALGAIRTVIAFGGQNKELERYQKHLENAKKIGIKKAISANISMGIAFLLIYASYALAFWYGSTLVISKEYTIGNAMTVFFSILIGAFSVGQAAPCIDAFANARGAAYVIFDIIDNNPKIDSFSERGHKPDSIKGNLDFSDVHFSYPSRANIKILKGLNLKVQSGQTVALVGNSGCGKTTTLQLLQRLYDPTEGTISIDGQDIRNFNVRYLREIIGVVSQEPVLFSTTIAENIRYGRGNVTMEEIKKAVKEANAYEFIMKLPQKFDTLVGERGAQLSGGQKQRIAIARALVRNPKILLLDEATSALDTESEAEVQAALDKAREGRTTIVIAHRLSTVRNADVIAGFEDGVIVEQGSHSELMQKEGVYFKLVNMQTSGSQILSQEFEVELSEEKAADGMTPNGWKSHIFRNSTKKSLKSSRAHHHRLDVDADELDANVPPVSFLKVLKLNKTEWPYFVVGTVCAIVNGALQPAISIILSEMIAIFGPGDDAVKQQKCNLFSLVFLGLGVLSFFTFFLQGFTFGKAGEILTTRLRSMAFKAMLRQDMSWFDDYKNSTGALSTRLATDRAQVQGATGTRLALIAQNTANLGTGIIISFIYGWQLTLLLLSVVPFIAVSGIVEMKMLAGNAKRDKKALEAAGKIATEAIENIRTVVSLTQERKFESMYVEKLHEPYRNSVQMAHIYGITFSISQAFMYFSYAGCFRFGAYLIVNGHMRFRDVILVFSAIVFGAVALGHASSFAPDYAKAKLSAAHLFSLFERQPLIDSYSGEGLWPDKFEGSVTFNEVVFNYPTRANMPVLQGLSLEVKKGQTLALVGSSGCGKSTVVQLLERFYDPMAGTVLLDGQEAKKLNIQWLRAQLGIVSQEPVLFDCSIAENIAYGDNSRVVSQDEIVRAAKAANIHPFIETLPQKYKTRVGDKGTQLSGGQKQRLAIRRALIRQPRVLLLDEATSALDTESEKVVQEALDKAREGRTCIVIAHRLSTIQNADLIVVIQNGKVKEHGTHQQLLAQKGIYFSMVNIQAGAQNS</sequence>
<protein>
    <recommendedName>
        <fullName evidence="2">Phosphatidylcholine translocator ABCB4</fullName>
        <ecNumber evidence="3">7.6.2.1</ecNumber>
    </recommendedName>
    <alternativeName>
        <fullName>ATP-binding cassette sub-family B member 4</fullName>
    </alternativeName>
    <alternativeName>
        <fullName evidence="2">Multidrug resistance protein 3</fullName>
    </alternativeName>
    <alternativeName>
        <fullName evidence="4">P-glycoprotein 3</fullName>
    </alternativeName>
</protein>